<evidence type="ECO:0000305" key="1"/>
<organism>
    <name type="scientific">Escherichia coli (strain K12)</name>
    <dbReference type="NCBI Taxonomy" id="83333"/>
    <lineage>
        <taxon>Bacteria</taxon>
        <taxon>Pseudomonadati</taxon>
        <taxon>Pseudomonadota</taxon>
        <taxon>Gammaproteobacteria</taxon>
        <taxon>Enterobacterales</taxon>
        <taxon>Enterobacteriaceae</taxon>
        <taxon>Escherichia</taxon>
    </lineage>
</organism>
<dbReference type="EMBL" id="U00096">
    <property type="protein sequence ID" value="AAC74005.1"/>
    <property type="molecule type" value="Genomic_DNA"/>
</dbReference>
<dbReference type="EMBL" id="AP009048">
    <property type="protein sequence ID" value="BAA35665.1"/>
    <property type="molecule type" value="Genomic_DNA"/>
</dbReference>
<dbReference type="EMBL" id="J02614">
    <property type="protein sequence ID" value="AAA83878.1"/>
    <property type="molecule type" value="Genomic_DNA"/>
</dbReference>
<dbReference type="PIR" id="F64831">
    <property type="entry name" value="F64831"/>
</dbReference>
<dbReference type="RefSeq" id="NP_415439.1">
    <property type="nucleotide sequence ID" value="NC_000913.3"/>
</dbReference>
<dbReference type="RefSeq" id="WP_000436922.1">
    <property type="nucleotide sequence ID" value="NZ_STEB01000006.1"/>
</dbReference>
<dbReference type="SMR" id="P0AB03"/>
<dbReference type="BioGRID" id="4260655">
    <property type="interactions" value="18"/>
</dbReference>
<dbReference type="DIP" id="DIP-48267N"/>
<dbReference type="FunCoup" id="P0AB03">
    <property type="interactions" value="139"/>
</dbReference>
<dbReference type="IntAct" id="P0AB03">
    <property type="interactions" value="1"/>
</dbReference>
<dbReference type="STRING" id="511145.b0919"/>
<dbReference type="jPOST" id="P0AB03"/>
<dbReference type="PaxDb" id="511145-b0919"/>
<dbReference type="EnsemblBacteria" id="AAC74005">
    <property type="protein sequence ID" value="AAC74005"/>
    <property type="gene ID" value="b0919"/>
</dbReference>
<dbReference type="GeneID" id="945545"/>
<dbReference type="KEGG" id="ecj:JW0902"/>
<dbReference type="KEGG" id="eco:b0919"/>
<dbReference type="KEGG" id="ecoc:C3026_05655"/>
<dbReference type="PATRIC" id="fig|511145.12.peg.950"/>
<dbReference type="EchoBASE" id="EB3466"/>
<dbReference type="eggNOG" id="COG3173">
    <property type="taxonomic scope" value="Bacteria"/>
</dbReference>
<dbReference type="HOGENOM" id="CLU_080412_0_0_6"/>
<dbReference type="InParanoid" id="P0AB03"/>
<dbReference type="OMA" id="WYQQRVE"/>
<dbReference type="OrthoDB" id="6533705at2"/>
<dbReference type="PhylomeDB" id="P0AB03"/>
<dbReference type="BioCyc" id="EcoCyc:G6473-MONOMER"/>
<dbReference type="PRO" id="PR:P0AB03"/>
<dbReference type="Proteomes" id="UP000000625">
    <property type="component" value="Chromosome"/>
</dbReference>
<dbReference type="InterPro" id="IPR002575">
    <property type="entry name" value="Aminoglycoside_PTrfase"/>
</dbReference>
<dbReference type="InterPro" id="IPR011009">
    <property type="entry name" value="Kinase-like_dom_sf"/>
</dbReference>
<dbReference type="NCBIfam" id="NF007890">
    <property type="entry name" value="PRK10593.1"/>
    <property type="match status" value="1"/>
</dbReference>
<dbReference type="Pfam" id="PF01636">
    <property type="entry name" value="APH"/>
    <property type="match status" value="1"/>
</dbReference>
<dbReference type="SUPFAM" id="SSF56112">
    <property type="entry name" value="Protein kinase-like (PK-like)"/>
    <property type="match status" value="1"/>
</dbReference>
<keyword id="KW-1185">Reference proteome</keyword>
<name>YCBJ_ECOLI</name>
<protein>
    <recommendedName>
        <fullName>Uncharacterized protein YcbJ</fullName>
    </recommendedName>
</protein>
<reference key="1">
    <citation type="journal article" date="1996" name="DNA Res.">
        <title>A 718-kb DNA sequence of the Escherichia coli K-12 genome corresponding to the 12.7-28.0 min region on the linkage map.</title>
        <authorList>
            <person name="Oshima T."/>
            <person name="Aiba H."/>
            <person name="Baba T."/>
            <person name="Fujita K."/>
            <person name="Hayashi K."/>
            <person name="Honjo A."/>
            <person name="Ikemoto K."/>
            <person name="Inada T."/>
            <person name="Itoh T."/>
            <person name="Kajihara M."/>
            <person name="Kanai K."/>
            <person name="Kashimoto K."/>
            <person name="Kimura S."/>
            <person name="Kitagawa M."/>
            <person name="Makino K."/>
            <person name="Masuda S."/>
            <person name="Miki T."/>
            <person name="Mizobuchi K."/>
            <person name="Mori H."/>
            <person name="Motomura K."/>
            <person name="Nakamura Y."/>
            <person name="Nashimoto H."/>
            <person name="Nishio Y."/>
            <person name="Saito N."/>
            <person name="Sampei G."/>
            <person name="Seki Y."/>
            <person name="Tagami H."/>
            <person name="Takemoto K."/>
            <person name="Wada C."/>
            <person name="Yamamoto Y."/>
            <person name="Yano M."/>
            <person name="Horiuchi T."/>
        </authorList>
    </citation>
    <scope>NUCLEOTIDE SEQUENCE [LARGE SCALE GENOMIC DNA]</scope>
    <source>
        <strain>K12 / W3110 / ATCC 27325 / DSM 5911</strain>
    </source>
</reference>
<reference key="2">
    <citation type="journal article" date="1997" name="Science">
        <title>The complete genome sequence of Escherichia coli K-12.</title>
        <authorList>
            <person name="Blattner F.R."/>
            <person name="Plunkett G. III"/>
            <person name="Bloch C.A."/>
            <person name="Perna N.T."/>
            <person name="Burland V."/>
            <person name="Riley M."/>
            <person name="Collado-Vides J."/>
            <person name="Glasner J.D."/>
            <person name="Rode C.K."/>
            <person name="Mayhew G.F."/>
            <person name="Gregor J."/>
            <person name="Davis N.W."/>
            <person name="Kirkpatrick H.A."/>
            <person name="Goeden M.A."/>
            <person name="Rose D.J."/>
            <person name="Mau B."/>
            <person name="Shao Y."/>
        </authorList>
    </citation>
    <scope>NUCLEOTIDE SEQUENCE [LARGE SCALE GENOMIC DNA]</scope>
    <source>
        <strain>K12 / MG1655 / ATCC 47076</strain>
    </source>
</reference>
<reference key="3">
    <citation type="journal article" date="2006" name="Mol. Syst. Biol.">
        <title>Highly accurate genome sequences of Escherichia coli K-12 strains MG1655 and W3110.</title>
        <authorList>
            <person name="Hayashi K."/>
            <person name="Morooka N."/>
            <person name="Yamamoto Y."/>
            <person name="Fujita K."/>
            <person name="Isono K."/>
            <person name="Choi S."/>
            <person name="Ohtsubo E."/>
            <person name="Baba T."/>
            <person name="Wanner B.L."/>
            <person name="Mori H."/>
            <person name="Horiuchi T."/>
        </authorList>
    </citation>
    <scope>NUCLEOTIDE SEQUENCE [LARGE SCALE GENOMIC DNA]</scope>
    <source>
        <strain>K12 / W3110 / ATCC 27325 / DSM 5911</strain>
    </source>
</reference>
<reference key="4">
    <citation type="journal article" date="1986" name="J. Biol. Chem.">
        <title>Primary structure of CTP:CMP-3-deoxy-D-manno-octulosonate cytidylyltransferase (CMP-KDO synthetase) from Escherichia coli.</title>
        <authorList>
            <person name="Goldman R.C."/>
            <person name="Bolling T.J."/>
            <person name="Kohlbrenner W.E."/>
            <person name="Kim Y."/>
            <person name="Fox J.L."/>
        </authorList>
    </citation>
    <scope>NUCLEOTIDE SEQUENCE [GENOMIC DNA] OF 1-47</scope>
    <source>
        <strain>K12</strain>
    </source>
</reference>
<feature type="chain" id="PRO_0000168770" description="Uncharacterized protein YcbJ">
    <location>
        <begin position="1"/>
        <end position="297"/>
    </location>
</feature>
<feature type="sequence conflict" description="In Ref. 4; AAA83878." evidence="1" ref="4">
    <original>E</original>
    <variation>Q</variation>
    <location>
        <position position="7"/>
    </location>
</feature>
<proteinExistence type="predicted"/>
<accession>P0AB03</accession>
<accession>P75845</accession>
<accession>Q47327</accession>
<gene>
    <name type="primary">ycbJ</name>
    <name type="ordered locus">b0919</name>
    <name type="ordered locus">JW0902</name>
</gene>
<sequence length="297" mass="34488">MEQLRAELSHLLGEKLSRIECVNEKADTALWALYDSQGNPMPLMARSFSTPGKARQLAWKTTMLARSGTVRMPTIYGVMTHEEHPGPDVLLLERMRGVSVEAPARTPERWEQLKDQIVEALLAWHRQDSRGCVGAVDNTQENFWPSWYRQHVEVLWTTLNQFNNTGLTMQDKRILFRTRECLPALFEGFNDNCVLIHGNFCLRSMLKDSRSDQLLAMVGPGLMLWAPREYELFRLMDNSLAEDLLWSYLQRAPVAESFIWRRWLYVLWDEVAQLVNTGRFSRRNFDLASKSLLPWLA</sequence>